<sequence>MISEENFQQHTPMMQQYLKLKAENPDILLFYRMGDFYELFYDDAKKAAALLDISLTKRGQSAGQPIPMAGMPYHAVEGYLAKLVQLGESVAICEQIGDPSTSKGPVERQIVRIVTPGTVSDEALLPERQDNLIAAVYQEKEKFGLATLDMTSGRFQLCEPADKETLRAELQRIVPVELLYCEEFNEMAAIEHCKGLRRRPIWEFELSTAITLLNRQFGTKDLRAFGVEKSPLGLSAAGCLLQYAKETQRTALPHIQSISLIQNQDCIQLDAATRRNLELTQNLSGGTENTLASVLDKCVTPMGSRLLKRWIHQPIRDVEKLKQRQQAIAEILNFDLVDELQPYLQLVGDMERILARVALRSARPRDLTRLRTALEQIPALRTIVQQKTSPFLTALFSQIADFSEQWDLLQRALIETPPLLIRDGGVIAEGYHAELDEWRMLSDGATQYLENLEKRERESTGIDTLKIGFNAVHGYYIQISQGQAHKAPIHYVRRQTLKNAERYIIPELKEYEDKVLKSKGAALALEKQLYDELFDLLLPHLGSLQLASLALSELDVLVNLAECADTLNYVMPTFCDEVSVKIENGRHPVVEQVLKDPFIANPVELNHNRHLLIITGPNMGGKSTYMRQTALITLLAYIGSFVPADSARIGPIDRIFTRIGASDDLASGRSTFMVEMTEMANILHQATEQSLVLIDEIGRGTSTYDGLSLAWACAEWLAKKIRSLTLFATHYFELTALPEQLEGIANIHLDALEHNNSIAFMHAVQDGAASKSYGLAVAALAGVPQSVIKLAKQKLTQLEKNSSYSAEQQIQALREANHNQGELLFEQETDALREAIEKLDPDDLSPKQALAYLYQLKKMVG</sequence>
<feature type="chain" id="PRO_0000224375" description="DNA mismatch repair protein MutS">
    <location>
        <begin position="1"/>
        <end position="861"/>
    </location>
</feature>
<feature type="binding site" evidence="1">
    <location>
        <begin position="616"/>
        <end position="623"/>
    </location>
    <ligand>
        <name>ATP</name>
        <dbReference type="ChEBI" id="CHEBI:30616"/>
    </ligand>
</feature>
<organism>
    <name type="scientific">Haemophilus influenzae (strain 86-028NP)</name>
    <dbReference type="NCBI Taxonomy" id="281310"/>
    <lineage>
        <taxon>Bacteria</taxon>
        <taxon>Pseudomonadati</taxon>
        <taxon>Pseudomonadota</taxon>
        <taxon>Gammaproteobacteria</taxon>
        <taxon>Pasteurellales</taxon>
        <taxon>Pasteurellaceae</taxon>
        <taxon>Haemophilus</taxon>
    </lineage>
</organism>
<reference key="1">
    <citation type="journal article" date="2005" name="J. Bacteriol.">
        <title>Genomic sequence of an otitis media isolate of nontypeable Haemophilus influenzae: comparative study with H. influenzae serotype d, strain KW20.</title>
        <authorList>
            <person name="Harrison A."/>
            <person name="Dyer D.W."/>
            <person name="Gillaspy A."/>
            <person name="Ray W.C."/>
            <person name="Mungur R."/>
            <person name="Carson M.B."/>
            <person name="Zhong H."/>
            <person name="Gipson J."/>
            <person name="Gipson M."/>
            <person name="Johnson L.S."/>
            <person name="Lewis L."/>
            <person name="Bakaletz L.O."/>
            <person name="Munson R.S. Jr."/>
        </authorList>
    </citation>
    <scope>NUCLEOTIDE SEQUENCE [LARGE SCALE GENOMIC DNA]</scope>
    <source>
        <strain>86-028NP</strain>
    </source>
</reference>
<keyword id="KW-0067">ATP-binding</keyword>
<keyword id="KW-0227">DNA damage</keyword>
<keyword id="KW-0234">DNA repair</keyword>
<keyword id="KW-0238">DNA-binding</keyword>
<keyword id="KW-0547">Nucleotide-binding</keyword>
<comment type="function">
    <text evidence="1">This protein is involved in the repair of mismatches in DNA. It is possible that it carries out the mismatch recognition step. This protein has a weak ATPase activity.</text>
</comment>
<comment type="similarity">
    <text evidence="1">Belongs to the DNA mismatch repair MutS family.</text>
</comment>
<dbReference type="EMBL" id="CP000057">
    <property type="protein sequence ID" value="AAX87735.1"/>
    <property type="molecule type" value="Genomic_DNA"/>
</dbReference>
<dbReference type="RefSeq" id="WP_011272182.1">
    <property type="nucleotide sequence ID" value="NC_007146.2"/>
</dbReference>
<dbReference type="SMR" id="Q4QML2"/>
<dbReference type="KEGG" id="hit:NTHI0834"/>
<dbReference type="HOGENOM" id="CLU_002472_7_2_6"/>
<dbReference type="Proteomes" id="UP000002525">
    <property type="component" value="Chromosome"/>
</dbReference>
<dbReference type="GO" id="GO:0005829">
    <property type="term" value="C:cytosol"/>
    <property type="evidence" value="ECO:0007669"/>
    <property type="project" value="TreeGrafter"/>
</dbReference>
<dbReference type="GO" id="GO:0005524">
    <property type="term" value="F:ATP binding"/>
    <property type="evidence" value="ECO:0007669"/>
    <property type="project" value="UniProtKB-UniRule"/>
</dbReference>
<dbReference type="GO" id="GO:0140664">
    <property type="term" value="F:ATP-dependent DNA damage sensor activity"/>
    <property type="evidence" value="ECO:0007669"/>
    <property type="project" value="InterPro"/>
</dbReference>
<dbReference type="GO" id="GO:0003684">
    <property type="term" value="F:damaged DNA binding"/>
    <property type="evidence" value="ECO:0007669"/>
    <property type="project" value="UniProtKB-UniRule"/>
</dbReference>
<dbReference type="GO" id="GO:0030983">
    <property type="term" value="F:mismatched DNA binding"/>
    <property type="evidence" value="ECO:0007669"/>
    <property type="project" value="InterPro"/>
</dbReference>
<dbReference type="GO" id="GO:0006298">
    <property type="term" value="P:mismatch repair"/>
    <property type="evidence" value="ECO:0007669"/>
    <property type="project" value="UniProtKB-UniRule"/>
</dbReference>
<dbReference type="CDD" id="cd03284">
    <property type="entry name" value="ABC_MutS1"/>
    <property type="match status" value="1"/>
</dbReference>
<dbReference type="FunFam" id="1.10.1420.10:FF:000002">
    <property type="entry name" value="DNA mismatch repair protein MutS"/>
    <property type="match status" value="1"/>
</dbReference>
<dbReference type="FunFam" id="3.30.420.110:FF:000001">
    <property type="entry name" value="DNA mismatch repair protein MutS"/>
    <property type="match status" value="1"/>
</dbReference>
<dbReference type="FunFam" id="3.40.1170.10:FF:000001">
    <property type="entry name" value="DNA mismatch repair protein MutS"/>
    <property type="match status" value="1"/>
</dbReference>
<dbReference type="FunFam" id="3.40.50.300:FF:000283">
    <property type="entry name" value="DNA mismatch repair protein MutS"/>
    <property type="match status" value="1"/>
</dbReference>
<dbReference type="Gene3D" id="1.10.1420.10">
    <property type="match status" value="2"/>
</dbReference>
<dbReference type="Gene3D" id="6.10.140.430">
    <property type="match status" value="1"/>
</dbReference>
<dbReference type="Gene3D" id="3.40.1170.10">
    <property type="entry name" value="DNA repair protein MutS, domain I"/>
    <property type="match status" value="1"/>
</dbReference>
<dbReference type="Gene3D" id="3.30.420.110">
    <property type="entry name" value="MutS, connector domain"/>
    <property type="match status" value="1"/>
</dbReference>
<dbReference type="Gene3D" id="3.40.50.300">
    <property type="entry name" value="P-loop containing nucleotide triphosphate hydrolases"/>
    <property type="match status" value="1"/>
</dbReference>
<dbReference type="HAMAP" id="MF_00096">
    <property type="entry name" value="MutS"/>
    <property type="match status" value="1"/>
</dbReference>
<dbReference type="InterPro" id="IPR005748">
    <property type="entry name" value="DNA_mismatch_repair_MutS"/>
</dbReference>
<dbReference type="InterPro" id="IPR007695">
    <property type="entry name" value="DNA_mismatch_repair_MutS-lik_N"/>
</dbReference>
<dbReference type="InterPro" id="IPR017261">
    <property type="entry name" value="DNA_mismatch_repair_MutS/MSH"/>
</dbReference>
<dbReference type="InterPro" id="IPR000432">
    <property type="entry name" value="DNA_mismatch_repair_MutS_C"/>
</dbReference>
<dbReference type="InterPro" id="IPR007861">
    <property type="entry name" value="DNA_mismatch_repair_MutS_clamp"/>
</dbReference>
<dbReference type="InterPro" id="IPR007696">
    <property type="entry name" value="DNA_mismatch_repair_MutS_core"/>
</dbReference>
<dbReference type="InterPro" id="IPR016151">
    <property type="entry name" value="DNA_mismatch_repair_MutS_N"/>
</dbReference>
<dbReference type="InterPro" id="IPR036187">
    <property type="entry name" value="DNA_mismatch_repair_MutS_sf"/>
</dbReference>
<dbReference type="InterPro" id="IPR007860">
    <property type="entry name" value="DNA_mmatch_repair_MutS_con_dom"/>
</dbReference>
<dbReference type="InterPro" id="IPR045076">
    <property type="entry name" value="MutS"/>
</dbReference>
<dbReference type="InterPro" id="IPR036678">
    <property type="entry name" value="MutS_con_dom_sf"/>
</dbReference>
<dbReference type="InterPro" id="IPR027417">
    <property type="entry name" value="P-loop_NTPase"/>
</dbReference>
<dbReference type="NCBIfam" id="TIGR01070">
    <property type="entry name" value="mutS1"/>
    <property type="match status" value="1"/>
</dbReference>
<dbReference type="NCBIfam" id="NF003810">
    <property type="entry name" value="PRK05399.1"/>
    <property type="match status" value="1"/>
</dbReference>
<dbReference type="PANTHER" id="PTHR11361:SF34">
    <property type="entry name" value="DNA MISMATCH REPAIR PROTEIN MSH1, MITOCHONDRIAL"/>
    <property type="match status" value="1"/>
</dbReference>
<dbReference type="PANTHER" id="PTHR11361">
    <property type="entry name" value="DNA MISMATCH REPAIR PROTEIN MUTS FAMILY MEMBER"/>
    <property type="match status" value="1"/>
</dbReference>
<dbReference type="Pfam" id="PF01624">
    <property type="entry name" value="MutS_I"/>
    <property type="match status" value="1"/>
</dbReference>
<dbReference type="Pfam" id="PF05188">
    <property type="entry name" value="MutS_II"/>
    <property type="match status" value="1"/>
</dbReference>
<dbReference type="Pfam" id="PF05192">
    <property type="entry name" value="MutS_III"/>
    <property type="match status" value="1"/>
</dbReference>
<dbReference type="Pfam" id="PF05190">
    <property type="entry name" value="MutS_IV"/>
    <property type="match status" value="1"/>
</dbReference>
<dbReference type="Pfam" id="PF00488">
    <property type="entry name" value="MutS_V"/>
    <property type="match status" value="1"/>
</dbReference>
<dbReference type="PIRSF" id="PIRSF037677">
    <property type="entry name" value="DNA_mis_repair_Msh6"/>
    <property type="match status" value="1"/>
</dbReference>
<dbReference type="SMART" id="SM00534">
    <property type="entry name" value="MUTSac"/>
    <property type="match status" value="1"/>
</dbReference>
<dbReference type="SMART" id="SM00533">
    <property type="entry name" value="MUTSd"/>
    <property type="match status" value="1"/>
</dbReference>
<dbReference type="SUPFAM" id="SSF55271">
    <property type="entry name" value="DNA repair protein MutS, domain I"/>
    <property type="match status" value="1"/>
</dbReference>
<dbReference type="SUPFAM" id="SSF53150">
    <property type="entry name" value="DNA repair protein MutS, domain II"/>
    <property type="match status" value="1"/>
</dbReference>
<dbReference type="SUPFAM" id="SSF48334">
    <property type="entry name" value="DNA repair protein MutS, domain III"/>
    <property type="match status" value="1"/>
</dbReference>
<dbReference type="SUPFAM" id="SSF52540">
    <property type="entry name" value="P-loop containing nucleoside triphosphate hydrolases"/>
    <property type="match status" value="1"/>
</dbReference>
<dbReference type="PROSITE" id="PS00486">
    <property type="entry name" value="DNA_MISMATCH_REPAIR_2"/>
    <property type="match status" value="1"/>
</dbReference>
<gene>
    <name evidence="1" type="primary">mutS</name>
    <name type="ordered locus">NTHI0834</name>
</gene>
<proteinExistence type="inferred from homology"/>
<evidence type="ECO:0000255" key="1">
    <source>
        <dbReference type="HAMAP-Rule" id="MF_00096"/>
    </source>
</evidence>
<name>MUTS_HAEI8</name>
<protein>
    <recommendedName>
        <fullName evidence="1">DNA mismatch repair protein MutS</fullName>
    </recommendedName>
</protein>
<accession>Q4QML2</accession>